<accession>Q0HG43</accession>
<comment type="function">
    <text evidence="1">Catalyzes the transfer of an acyl group from acyl-phosphate (acyl-PO(4)) to glycerol-3-phosphate (G3P) to form lysophosphatidic acid (LPA). This enzyme utilizes acyl-phosphate as fatty acyl donor, but not acyl-CoA or acyl-ACP.</text>
</comment>
<comment type="catalytic activity">
    <reaction evidence="1">
        <text>an acyl phosphate + sn-glycerol 3-phosphate = a 1-acyl-sn-glycero-3-phosphate + phosphate</text>
        <dbReference type="Rhea" id="RHEA:34075"/>
        <dbReference type="ChEBI" id="CHEBI:43474"/>
        <dbReference type="ChEBI" id="CHEBI:57597"/>
        <dbReference type="ChEBI" id="CHEBI:57970"/>
        <dbReference type="ChEBI" id="CHEBI:59918"/>
        <dbReference type="EC" id="2.3.1.275"/>
    </reaction>
</comment>
<comment type="pathway">
    <text evidence="1">Lipid metabolism; phospholipid metabolism.</text>
</comment>
<comment type="subunit">
    <text evidence="1">Probably interacts with PlsX.</text>
</comment>
<comment type="subcellular location">
    <subcellularLocation>
        <location evidence="1">Cell inner membrane</location>
        <topology evidence="1">Multi-pass membrane protein</topology>
    </subcellularLocation>
</comment>
<comment type="similarity">
    <text evidence="1">Belongs to the PlsY family.</text>
</comment>
<sequence length="203" mass="21673">MSQLTLTLLMIVAAYLAGSVSSAVLVCRMRGLPDPRSQGSGNPGATNVLRIGGASSAAMVLFFDMLKGALPTYLAYLMGIDAISLGLIAIAACLGHIYPIFFGFKGGKGVATAFGAMAPIGDDLAICLMASWVVLVLISRYSSLAAIITALLAPLYTWWLDDRFTIPVAMLSTLIIIRHKENIQRLLKGEESKVSRKKRPKTP</sequence>
<dbReference type="EC" id="2.3.1.275" evidence="1"/>
<dbReference type="EMBL" id="CP000446">
    <property type="protein sequence ID" value="ABI39974.1"/>
    <property type="molecule type" value="Genomic_DNA"/>
</dbReference>
<dbReference type="RefSeq" id="WP_011623653.1">
    <property type="nucleotide sequence ID" value="NC_008321.1"/>
</dbReference>
<dbReference type="SMR" id="Q0HG43"/>
<dbReference type="KEGG" id="she:Shewmr4_2903"/>
<dbReference type="HOGENOM" id="CLU_081254_0_2_6"/>
<dbReference type="UniPathway" id="UPA00085"/>
<dbReference type="GO" id="GO:0005886">
    <property type="term" value="C:plasma membrane"/>
    <property type="evidence" value="ECO:0007669"/>
    <property type="project" value="UniProtKB-SubCell"/>
</dbReference>
<dbReference type="GO" id="GO:0043772">
    <property type="term" value="F:acyl-phosphate glycerol-3-phosphate acyltransferase activity"/>
    <property type="evidence" value="ECO:0007669"/>
    <property type="project" value="UniProtKB-UniRule"/>
</dbReference>
<dbReference type="GO" id="GO:0008654">
    <property type="term" value="P:phospholipid biosynthetic process"/>
    <property type="evidence" value="ECO:0007669"/>
    <property type="project" value="UniProtKB-UniRule"/>
</dbReference>
<dbReference type="HAMAP" id="MF_01043">
    <property type="entry name" value="PlsY"/>
    <property type="match status" value="1"/>
</dbReference>
<dbReference type="InterPro" id="IPR003811">
    <property type="entry name" value="G3P_acylTferase_PlsY"/>
</dbReference>
<dbReference type="NCBIfam" id="TIGR00023">
    <property type="entry name" value="glycerol-3-phosphate 1-O-acyltransferase PlsY"/>
    <property type="match status" value="1"/>
</dbReference>
<dbReference type="PANTHER" id="PTHR30309:SF0">
    <property type="entry name" value="GLYCEROL-3-PHOSPHATE ACYLTRANSFERASE-RELATED"/>
    <property type="match status" value="1"/>
</dbReference>
<dbReference type="PANTHER" id="PTHR30309">
    <property type="entry name" value="INNER MEMBRANE PROTEIN YGIH"/>
    <property type="match status" value="1"/>
</dbReference>
<dbReference type="Pfam" id="PF02660">
    <property type="entry name" value="G3P_acyltransf"/>
    <property type="match status" value="1"/>
</dbReference>
<dbReference type="SMART" id="SM01207">
    <property type="entry name" value="G3P_acyltransf"/>
    <property type="match status" value="1"/>
</dbReference>
<name>PLSY_SHESM</name>
<reference key="1">
    <citation type="submission" date="2006-08" db="EMBL/GenBank/DDBJ databases">
        <title>Complete sequence of Shewanella sp. MR-4.</title>
        <authorList>
            <consortium name="US DOE Joint Genome Institute"/>
            <person name="Copeland A."/>
            <person name="Lucas S."/>
            <person name="Lapidus A."/>
            <person name="Barry K."/>
            <person name="Detter J.C."/>
            <person name="Glavina del Rio T."/>
            <person name="Hammon N."/>
            <person name="Israni S."/>
            <person name="Dalin E."/>
            <person name="Tice H."/>
            <person name="Pitluck S."/>
            <person name="Kiss H."/>
            <person name="Brettin T."/>
            <person name="Bruce D."/>
            <person name="Han C."/>
            <person name="Tapia R."/>
            <person name="Gilna P."/>
            <person name="Schmutz J."/>
            <person name="Larimer F."/>
            <person name="Land M."/>
            <person name="Hauser L."/>
            <person name="Kyrpides N."/>
            <person name="Mikhailova N."/>
            <person name="Nealson K."/>
            <person name="Konstantinidis K."/>
            <person name="Klappenbach J."/>
            <person name="Tiedje J."/>
            <person name="Richardson P."/>
        </authorList>
    </citation>
    <scope>NUCLEOTIDE SEQUENCE [LARGE SCALE GENOMIC DNA]</scope>
    <source>
        <strain>MR-4</strain>
    </source>
</reference>
<organism>
    <name type="scientific">Shewanella sp. (strain MR-4)</name>
    <dbReference type="NCBI Taxonomy" id="60480"/>
    <lineage>
        <taxon>Bacteria</taxon>
        <taxon>Pseudomonadati</taxon>
        <taxon>Pseudomonadota</taxon>
        <taxon>Gammaproteobacteria</taxon>
        <taxon>Alteromonadales</taxon>
        <taxon>Shewanellaceae</taxon>
        <taxon>Shewanella</taxon>
    </lineage>
</organism>
<gene>
    <name evidence="1" type="primary">plsY</name>
    <name type="ordered locus">Shewmr4_2903</name>
</gene>
<proteinExistence type="inferred from homology"/>
<feature type="chain" id="PRO_1000064226" description="Glycerol-3-phosphate acyltransferase">
    <location>
        <begin position="1"/>
        <end position="203"/>
    </location>
</feature>
<feature type="transmembrane region" description="Helical" evidence="1">
    <location>
        <begin position="6"/>
        <end position="26"/>
    </location>
</feature>
<feature type="transmembrane region" description="Helical" evidence="1">
    <location>
        <begin position="82"/>
        <end position="102"/>
    </location>
</feature>
<feature type="transmembrane region" description="Helical" evidence="1">
    <location>
        <begin position="118"/>
        <end position="138"/>
    </location>
</feature>
<feature type="transmembrane region" description="Helical" evidence="1">
    <location>
        <begin position="141"/>
        <end position="161"/>
    </location>
</feature>
<evidence type="ECO:0000255" key="1">
    <source>
        <dbReference type="HAMAP-Rule" id="MF_01043"/>
    </source>
</evidence>
<keyword id="KW-0997">Cell inner membrane</keyword>
<keyword id="KW-1003">Cell membrane</keyword>
<keyword id="KW-0444">Lipid biosynthesis</keyword>
<keyword id="KW-0443">Lipid metabolism</keyword>
<keyword id="KW-0472">Membrane</keyword>
<keyword id="KW-0594">Phospholipid biosynthesis</keyword>
<keyword id="KW-1208">Phospholipid metabolism</keyword>
<keyword id="KW-0808">Transferase</keyword>
<keyword id="KW-0812">Transmembrane</keyword>
<keyword id="KW-1133">Transmembrane helix</keyword>
<protein>
    <recommendedName>
        <fullName evidence="1">Glycerol-3-phosphate acyltransferase</fullName>
    </recommendedName>
    <alternativeName>
        <fullName evidence="1">Acyl-PO4 G3P acyltransferase</fullName>
    </alternativeName>
    <alternativeName>
        <fullName evidence="1">Acyl-phosphate--glycerol-3-phosphate acyltransferase</fullName>
    </alternativeName>
    <alternativeName>
        <fullName evidence="1">G3P acyltransferase</fullName>
        <shortName evidence="1">GPAT</shortName>
        <ecNumber evidence="1">2.3.1.275</ecNumber>
    </alternativeName>
    <alternativeName>
        <fullName evidence="1">Lysophosphatidic acid synthase</fullName>
        <shortName evidence="1">LPA synthase</shortName>
    </alternativeName>
</protein>